<proteinExistence type="evidence at protein level"/>
<reference key="1">
    <citation type="journal article" date="2005" name="Nature">
        <title>The map-based sequence of the rice genome.</title>
        <authorList>
            <consortium name="International rice genome sequencing project (IRGSP)"/>
        </authorList>
    </citation>
    <scope>NUCLEOTIDE SEQUENCE [LARGE SCALE GENOMIC DNA]</scope>
    <source>
        <strain>cv. Nipponbare</strain>
    </source>
</reference>
<reference key="2">
    <citation type="journal article" date="2008" name="Nucleic Acids Res.">
        <title>The rice annotation project database (RAP-DB): 2008 update.</title>
        <authorList>
            <consortium name="The rice annotation project (RAP)"/>
        </authorList>
    </citation>
    <scope>GENOME REANNOTATION</scope>
    <source>
        <strain>cv. Nipponbare</strain>
    </source>
</reference>
<reference key="3">
    <citation type="journal article" date="2013" name="Rice">
        <title>Improvement of the Oryza sativa Nipponbare reference genome using next generation sequence and optical map data.</title>
        <authorList>
            <person name="Kawahara Y."/>
            <person name="de la Bastide M."/>
            <person name="Hamilton J.P."/>
            <person name="Kanamori H."/>
            <person name="McCombie W.R."/>
            <person name="Ouyang S."/>
            <person name="Schwartz D.C."/>
            <person name="Tanaka T."/>
            <person name="Wu J."/>
            <person name="Zhou S."/>
            <person name="Childs K.L."/>
            <person name="Davidson R.M."/>
            <person name="Lin H."/>
            <person name="Quesada-Ocampo L."/>
            <person name="Vaillancourt B."/>
            <person name="Sakai H."/>
            <person name="Lee S.S."/>
            <person name="Kim J."/>
            <person name="Numa H."/>
            <person name="Itoh T."/>
            <person name="Buell C.R."/>
            <person name="Matsumoto T."/>
        </authorList>
    </citation>
    <scope>GENOME REANNOTATION</scope>
    <source>
        <strain>cv. Nipponbare</strain>
    </source>
</reference>
<reference key="4">
    <citation type="journal article" date="2005" name="PLoS Biol.">
        <title>The genomes of Oryza sativa: a history of duplications.</title>
        <authorList>
            <person name="Yu J."/>
            <person name="Wang J."/>
            <person name="Lin W."/>
            <person name="Li S."/>
            <person name="Li H."/>
            <person name="Zhou J."/>
            <person name="Ni P."/>
            <person name="Dong W."/>
            <person name="Hu S."/>
            <person name="Zeng C."/>
            <person name="Zhang J."/>
            <person name="Zhang Y."/>
            <person name="Li R."/>
            <person name="Xu Z."/>
            <person name="Li S."/>
            <person name="Li X."/>
            <person name="Zheng H."/>
            <person name="Cong L."/>
            <person name="Lin L."/>
            <person name="Yin J."/>
            <person name="Geng J."/>
            <person name="Li G."/>
            <person name="Shi J."/>
            <person name="Liu J."/>
            <person name="Lv H."/>
            <person name="Li J."/>
            <person name="Wang J."/>
            <person name="Deng Y."/>
            <person name="Ran L."/>
            <person name="Shi X."/>
            <person name="Wang X."/>
            <person name="Wu Q."/>
            <person name="Li C."/>
            <person name="Ren X."/>
            <person name="Wang J."/>
            <person name="Wang X."/>
            <person name="Li D."/>
            <person name="Liu D."/>
            <person name="Zhang X."/>
            <person name="Ji Z."/>
            <person name="Zhao W."/>
            <person name="Sun Y."/>
            <person name="Zhang Z."/>
            <person name="Bao J."/>
            <person name="Han Y."/>
            <person name="Dong L."/>
            <person name="Ji J."/>
            <person name="Chen P."/>
            <person name="Wu S."/>
            <person name="Liu J."/>
            <person name="Xiao Y."/>
            <person name="Bu D."/>
            <person name="Tan J."/>
            <person name="Yang L."/>
            <person name="Ye C."/>
            <person name="Zhang J."/>
            <person name="Xu J."/>
            <person name="Zhou Y."/>
            <person name="Yu Y."/>
            <person name="Zhang B."/>
            <person name="Zhuang S."/>
            <person name="Wei H."/>
            <person name="Liu B."/>
            <person name="Lei M."/>
            <person name="Yu H."/>
            <person name="Li Y."/>
            <person name="Xu H."/>
            <person name="Wei S."/>
            <person name="He X."/>
            <person name="Fang L."/>
            <person name="Zhang Z."/>
            <person name="Zhang Y."/>
            <person name="Huang X."/>
            <person name="Su Z."/>
            <person name="Tong W."/>
            <person name="Li J."/>
            <person name="Tong Z."/>
            <person name="Li S."/>
            <person name="Ye J."/>
            <person name="Wang L."/>
            <person name="Fang L."/>
            <person name="Lei T."/>
            <person name="Chen C.-S."/>
            <person name="Chen H.-C."/>
            <person name="Xu Z."/>
            <person name="Li H."/>
            <person name="Huang H."/>
            <person name="Zhang F."/>
            <person name="Xu H."/>
            <person name="Li N."/>
            <person name="Zhao C."/>
            <person name="Li S."/>
            <person name="Dong L."/>
            <person name="Huang Y."/>
            <person name="Li L."/>
            <person name="Xi Y."/>
            <person name="Qi Q."/>
            <person name="Li W."/>
            <person name="Zhang B."/>
            <person name="Hu W."/>
            <person name="Zhang Y."/>
            <person name="Tian X."/>
            <person name="Jiao Y."/>
            <person name="Liang X."/>
            <person name="Jin J."/>
            <person name="Gao L."/>
            <person name="Zheng W."/>
            <person name="Hao B."/>
            <person name="Liu S.-M."/>
            <person name="Wang W."/>
            <person name="Yuan L."/>
            <person name="Cao M."/>
            <person name="McDermott J."/>
            <person name="Samudrala R."/>
            <person name="Wang J."/>
            <person name="Wong G.K.-S."/>
            <person name="Yang H."/>
        </authorList>
    </citation>
    <scope>NUCLEOTIDE SEQUENCE [LARGE SCALE GENOMIC DNA]</scope>
    <source>
        <strain>cv. Nipponbare</strain>
    </source>
</reference>
<reference key="5">
    <citation type="journal article" date="2007" name="Plant Cell Physiol.">
        <title>Comparative overviews of clock-associated genes of Arabidopsis thaliana and Oryza sativa.</title>
        <authorList>
            <person name="Murakami M."/>
            <person name="Tago Y."/>
            <person name="Yamashino T."/>
            <person name="Mizuno T."/>
        </authorList>
    </citation>
    <scope>INDUCTION</scope>
</reference>
<reference key="6">
    <citation type="journal article" date="2020" name="Plant Cell">
        <title>The rice circadian clock regulates tiller growth and panicle development through strigolactone signaling and sugar sensing.</title>
        <authorList>
            <person name="Wang F."/>
            <person name="Han T."/>
            <person name="Song Q."/>
            <person name="Ye W."/>
            <person name="Song X."/>
            <person name="Chu J."/>
            <person name="Li J."/>
            <person name="Chen Z.J."/>
        </authorList>
    </citation>
    <scope>FUNCTION</scope>
    <scope>SUBUNIT</scope>
    <scope>TISSUE SPECIFICITY</scope>
    <scope>INDUCTION</scope>
</reference>
<reference key="7">
    <citation type="journal article" date="2021" name="Plant Biotechnol. J.">
        <title>Dual function of clock component OsLHY sets critical day length for photoperiodic flowering in rice.</title>
        <authorList>
            <person name="Sun C."/>
            <person name="Zhang K."/>
            <person name="Zhou Y."/>
            <person name="Xiang L."/>
            <person name="He C."/>
            <person name="Zhong C."/>
            <person name="Li K."/>
            <person name="Wang Q."/>
            <person name="Yang C."/>
            <person name="Wang Q."/>
            <person name="Chen C."/>
            <person name="Chen D."/>
            <person name="Wang Y."/>
            <person name="Liu C."/>
            <person name="Yang B."/>
            <person name="Wu H."/>
            <person name="Chen X."/>
            <person name="Li W."/>
            <person name="Wang J."/>
            <person name="Xu P."/>
            <person name="Wang P."/>
            <person name="Fang J."/>
            <person name="Chu C."/>
            <person name="Deng X."/>
        </authorList>
    </citation>
    <scope>FUNCTION</scope>
    <scope>DISRUPTION PHENOTYPE</scope>
</reference>
<reference key="8">
    <citation type="journal article" date="2022" name="Plant Physiol.">
        <title>Rice CIRCADIAN CLOCK ASSOCIATED 1 transcriptionally regulates ABA signaling to confer multiple abiotic stress tolerance.</title>
        <authorList>
            <person name="Wei H."/>
            <person name="Xu H."/>
            <person name="Su C."/>
            <person name="Wang X."/>
            <person name="Wang L."/>
        </authorList>
    </citation>
    <scope>FUNCTION</scope>
    <scope>SUBCELLULAR LOCATION</scope>
    <scope>DISRUPTION PHENOTYPE</scope>
</reference>
<dbReference type="EMBL" id="AP004460">
    <property type="protein sequence ID" value="BAC99516.1"/>
    <property type="status" value="ALT_SEQ"/>
    <property type="molecule type" value="Genomic_DNA"/>
</dbReference>
<dbReference type="EMBL" id="AP008214">
    <property type="protein sequence ID" value="BAF22946.1"/>
    <property type="molecule type" value="Genomic_DNA"/>
</dbReference>
<dbReference type="EMBL" id="AP014964">
    <property type="protein sequence ID" value="BAT03905.1"/>
    <property type="molecule type" value="Genomic_DNA"/>
</dbReference>
<dbReference type="EMBL" id="CM000145">
    <property type="protein sequence ID" value="EEE68076.1"/>
    <property type="molecule type" value="Genomic_DNA"/>
</dbReference>
<dbReference type="RefSeq" id="XP_015649835.1">
    <property type="nucleotide sequence ID" value="XM_015794349.1"/>
</dbReference>
<dbReference type="RefSeq" id="XP_015649836.1">
    <property type="nucleotide sequence ID" value="XM_015794350.1"/>
</dbReference>
<dbReference type="RefSeq" id="XP_015649837.1">
    <property type="nucleotide sequence ID" value="XM_015794351.1"/>
</dbReference>
<dbReference type="RefSeq" id="XP_015649838.1">
    <property type="nucleotide sequence ID" value="XM_015794352.1"/>
</dbReference>
<dbReference type="RefSeq" id="XP_015649839.1">
    <property type="nucleotide sequence ID" value="XM_015794353.1"/>
</dbReference>
<dbReference type="RefSeq" id="XP_015649840.1">
    <property type="nucleotide sequence ID" value="XM_015794354.1"/>
</dbReference>
<dbReference type="RefSeq" id="XP_015649841.1">
    <property type="nucleotide sequence ID" value="XM_015794355.1"/>
</dbReference>
<dbReference type="RefSeq" id="XP_015649842.1">
    <property type="nucleotide sequence ID" value="XM_015794356.1"/>
</dbReference>
<dbReference type="RefSeq" id="XP_015649844.1">
    <property type="nucleotide sequence ID" value="XM_015794358.1"/>
</dbReference>
<dbReference type="RefSeq" id="XP_015649845.1">
    <property type="nucleotide sequence ID" value="XM_015794359.1"/>
</dbReference>
<dbReference type="SMR" id="A0A0P0XBU0"/>
<dbReference type="FunCoup" id="A0A0P0XBU0">
    <property type="interactions" value="1133"/>
</dbReference>
<dbReference type="STRING" id="39947.Q0J7W9"/>
<dbReference type="PaxDb" id="39947-Q0J7W9"/>
<dbReference type="EnsemblPlants" id="Os08t0157600-01">
    <property type="protein sequence ID" value="Os08t0157600-01"/>
    <property type="gene ID" value="Os08g0157600"/>
</dbReference>
<dbReference type="GeneID" id="4344703"/>
<dbReference type="Gramene" id="Os08t0157600-01">
    <property type="protein sequence ID" value="Os08t0157600-01"/>
    <property type="gene ID" value="Os08g0157600"/>
</dbReference>
<dbReference type="KEGG" id="dosa:Os08g0157600"/>
<dbReference type="eggNOG" id="KOG0724">
    <property type="taxonomic scope" value="Eukaryota"/>
</dbReference>
<dbReference type="HOGENOM" id="CLU_025358_0_0_1"/>
<dbReference type="InParanoid" id="A0A0P0XBU0"/>
<dbReference type="OMA" id="SHYQMDR"/>
<dbReference type="OrthoDB" id="118550at2759"/>
<dbReference type="PlantReactome" id="R-OSA-8933811">
    <property type="pathway name" value="Circadian rhythm"/>
</dbReference>
<dbReference type="Proteomes" id="UP000000763">
    <property type="component" value="Chromosome 8"/>
</dbReference>
<dbReference type="Proteomes" id="UP000007752">
    <property type="component" value="Chromosome 8"/>
</dbReference>
<dbReference type="Proteomes" id="UP000059680">
    <property type="component" value="Chromosome 8"/>
</dbReference>
<dbReference type="GO" id="GO:0005634">
    <property type="term" value="C:nucleus"/>
    <property type="evidence" value="ECO:0007669"/>
    <property type="project" value="UniProtKB-SubCell"/>
</dbReference>
<dbReference type="GO" id="GO:0003677">
    <property type="term" value="F:DNA binding"/>
    <property type="evidence" value="ECO:0007669"/>
    <property type="project" value="UniProtKB-KW"/>
</dbReference>
<dbReference type="CDD" id="cd00167">
    <property type="entry name" value="SANT"/>
    <property type="match status" value="1"/>
</dbReference>
<dbReference type="FunFam" id="1.10.10.60:FF:000023">
    <property type="entry name" value="protein REVEILLE 6 isoform X1"/>
    <property type="match status" value="1"/>
</dbReference>
<dbReference type="Gene3D" id="1.10.10.60">
    <property type="entry name" value="Homeodomain-like"/>
    <property type="match status" value="1"/>
</dbReference>
<dbReference type="InterPro" id="IPR009057">
    <property type="entry name" value="Homeodomain-like_sf"/>
</dbReference>
<dbReference type="InterPro" id="IPR017930">
    <property type="entry name" value="Myb_dom"/>
</dbReference>
<dbReference type="InterPro" id="IPR006447">
    <property type="entry name" value="Myb_dom_plants"/>
</dbReference>
<dbReference type="InterPro" id="IPR001005">
    <property type="entry name" value="SANT/Myb"/>
</dbReference>
<dbReference type="InterPro" id="IPR017884">
    <property type="entry name" value="SANT_dom"/>
</dbReference>
<dbReference type="NCBIfam" id="TIGR01557">
    <property type="entry name" value="myb_SHAQKYF"/>
    <property type="match status" value="1"/>
</dbReference>
<dbReference type="PANTHER" id="PTHR12802:SF177">
    <property type="entry name" value="PROTEIN CCA1"/>
    <property type="match status" value="1"/>
</dbReference>
<dbReference type="PANTHER" id="PTHR12802">
    <property type="entry name" value="SWI/SNF COMPLEX-RELATED"/>
    <property type="match status" value="1"/>
</dbReference>
<dbReference type="Pfam" id="PF00249">
    <property type="entry name" value="Myb_DNA-binding"/>
    <property type="match status" value="1"/>
</dbReference>
<dbReference type="SMART" id="SM00717">
    <property type="entry name" value="SANT"/>
    <property type="match status" value="1"/>
</dbReference>
<dbReference type="SUPFAM" id="SSF46689">
    <property type="entry name" value="Homeodomain-like"/>
    <property type="match status" value="1"/>
</dbReference>
<dbReference type="PROSITE" id="PS51294">
    <property type="entry name" value="HTH_MYB"/>
    <property type="match status" value="1"/>
</dbReference>
<organism>
    <name type="scientific">Oryza sativa subsp. japonica</name>
    <name type="common">Rice</name>
    <dbReference type="NCBI Taxonomy" id="39947"/>
    <lineage>
        <taxon>Eukaryota</taxon>
        <taxon>Viridiplantae</taxon>
        <taxon>Streptophyta</taxon>
        <taxon>Embryophyta</taxon>
        <taxon>Tracheophyta</taxon>
        <taxon>Spermatophyta</taxon>
        <taxon>Magnoliopsida</taxon>
        <taxon>Liliopsida</taxon>
        <taxon>Poales</taxon>
        <taxon>Poaceae</taxon>
        <taxon>BOP clade</taxon>
        <taxon>Oryzoideae</taxon>
        <taxon>Oryzeae</taxon>
        <taxon>Oryzinae</taxon>
        <taxon>Oryza</taxon>
        <taxon>Oryza sativa</taxon>
    </lineage>
</organism>
<name>CCA1_ORYSJ</name>
<gene>
    <name evidence="7" type="primary">CCA1</name>
    <name type="synonym">LHY</name>
    <name evidence="11" type="ordered locus">Os08g0157600</name>
    <name evidence="9" type="ordered locus">LOC_Os08g06110</name>
    <name evidence="12" type="ORF">OsJ_26106</name>
    <name evidence="10" type="ORF">P0438H08.34</name>
</gene>
<protein>
    <recommendedName>
        <fullName evidence="7">Protein CCA1</fullName>
    </recommendedName>
    <alternativeName>
        <fullName evidence="9">MYB-related transcription factor CCA1</fullName>
    </alternativeName>
    <alternativeName>
        <fullName evidence="7">Protein CIRCADIAN CLOCK ASSOCIATED 1</fullName>
        <shortName evidence="7">OsCCA1</shortName>
    </alternativeName>
    <alternativeName>
        <fullName evidence="8">Protein LATE ELONGATED HYPOCOTYL homolog</fullName>
        <shortName evidence="8">OsLHY</shortName>
    </alternativeName>
</protein>
<sequence>MEINSSGEEAVVKVRKPYTITKQRERWTEAEHNRFLEALKLYGRAWQRIEEHVGTKTAVQIRSHAQKFFTKLEKEAINNGTSPGQAHDIDIPPPRPKRKPNSPYPRKSCLSSETSTREVQNDKATISNMTNNSTAQMAGDAALEKLQRKEISEKGSCSEVLNLFREVPSASFSSVNKSSSNHGASRGLEPTKTEVKDVVILERDSISNGAGKDAKDINDQEMERLNGIHISSKPDHSHENCLDTSSQQFKPKSNSVETTYVDWSAAKASHYQMDRNGVTGFQATGTEGSHPDQTSDQMGGASGTMNQCIHPTLPVDPKFDGNAAAQPFPHNYAAFAPMMQCHCNQDAYRSFANMSSTFSSMLVSTLLSNPAIHAAARLAASYWPTVDGNTPDPNQENLSESAQGSHAGSPPNMASIVTATVAAASAWWATQGLLPLFPPPIAFPFVPAPSAPFSTADVQRAQEKDIDCPMDNAQKELQETRKQDNFEAMKVIVSSETDESGKGEVSLHTELKISPADKADTKPAAGAETSDVFGNKKKQDRSSCGSNTPSSSDIEADNAPENQEKANDKAKQASCSNSSAGDNNHRRFRSSASTSDSWKEVSEEGRLAFDALFSRERLPQSFSPPQVEGSKEISKEEEDEVTTVTVDLNKNAAIIDQELDTADEPRASFPNELSNLKLKSRRTGFKPYKRCSVEAKENRVPASDEVGTKRIRLESEAST</sequence>
<comment type="function">
    <text evidence="4 5 6">Transcription factor involved in the regulation of tiller growth and panicle development (PubMed:32796126). Plays a negative role in tillering and a positive role in panicle development (PubMed:32796126). Binds to TB1 and CCD8B/D10 promoters and activates their expression (PubMed:32796126). Acts upstream of TB1 or D14 to regulate the strigolactone (SL) pathway (PubMed:32796126). Regulates SPL14/IPA1 expression to mediate panicle and grain development (PubMed:32796126). Participates in the circadian rhythm pathway and the regulation of photoperiodic flowering (PubMed:33740293). Can directly bind to the promoter of GI (GIGANTEA) (PubMed:33740293). May form a transcriptional feedback loop with GI, and control the photoperiodic flowering through fine-tuning rhythm expression of HD1 (PubMed:33740293). Involved in the positive regulation of tolerance to abiotic stresses, such as salinity, osmotic, and drought stresses (PubMed:35512208). Targets and directly activates the expression of BZIP46 and PP2C68/PP108 that are genes involved in abscisic acid (ABA) signaling and positive response to abiotic stresses (PubMed:35512208).</text>
</comment>
<comment type="subunit">
    <text evidence="4">Forms homodimers.</text>
</comment>
<comment type="subcellular location">
    <subcellularLocation>
        <location evidence="6">Nucleus</location>
    </subcellularLocation>
</comment>
<comment type="tissue specificity">
    <text evidence="4">Expressed in leaves, shoots, inflorescences, embryos, endosperm and seeds.</text>
</comment>
<comment type="induction">
    <text evidence="3 4">Circadian regulation under long day (LD) conditions. Expression peaks at dawn, gradually declines until dusk, and increased at night.</text>
</comment>
<comment type="disruption phenotype">
    <text evidence="5 6">Late flowering under long day (LD) conditions, but early heading under short day (SD) conditions (PubMed:33740293). Enhanced sensitivity to salinity, osmotic, and drought stresses (PubMed:35512208).</text>
</comment>
<comment type="miscellaneous">
    <text evidence="4">Plants overexpressing CCA1 have a reduced number of tillers (PubMed:32796126). Plants silencing CCA1 have an increased number of tillers (PubMed:32796126).</text>
</comment>
<comment type="sequence caution" evidence="9">
    <conflict type="erroneous gene model prediction">
        <sequence resource="EMBL-CDS" id="BAC99516"/>
    </conflict>
</comment>
<accession>A0A0P0XBU0</accession>
<accession>B9FZ59</accession>
<accession>Q0J7W9</accession>
<accession>Q6ZD85</accession>
<keyword id="KW-0238">DNA-binding</keyword>
<keyword id="KW-0341">Growth regulation</keyword>
<keyword id="KW-0539">Nucleus</keyword>
<keyword id="KW-1185">Reference proteome</keyword>
<keyword id="KW-0346">Stress response</keyword>
<keyword id="KW-0804">Transcription</keyword>
<keyword id="KW-0805">Transcription regulation</keyword>
<evidence type="ECO:0000255" key="1">
    <source>
        <dbReference type="PROSITE-ProRule" id="PRU00625"/>
    </source>
</evidence>
<evidence type="ECO:0000256" key="2">
    <source>
        <dbReference type="SAM" id="MobiDB-lite"/>
    </source>
</evidence>
<evidence type="ECO:0000269" key="3">
    <source>
    </source>
</evidence>
<evidence type="ECO:0000269" key="4">
    <source>
    </source>
</evidence>
<evidence type="ECO:0000269" key="5">
    <source>
    </source>
</evidence>
<evidence type="ECO:0000269" key="6">
    <source>
    </source>
</evidence>
<evidence type="ECO:0000303" key="7">
    <source>
    </source>
</evidence>
<evidence type="ECO:0000303" key="8">
    <source>
    </source>
</evidence>
<evidence type="ECO:0000305" key="9"/>
<evidence type="ECO:0000312" key="10">
    <source>
        <dbReference type="EMBL" id="BAC99516.1"/>
    </source>
</evidence>
<evidence type="ECO:0000312" key="11">
    <source>
        <dbReference type="EMBL" id="BAT03905.1"/>
    </source>
</evidence>
<evidence type="ECO:0000312" key="12">
    <source>
        <dbReference type="EMBL" id="EEE68076.1"/>
    </source>
</evidence>
<feature type="chain" id="PRO_0000457211" description="Protein CCA1">
    <location>
        <begin position="1"/>
        <end position="719"/>
    </location>
</feature>
<feature type="domain" description="HTH myb-type" evidence="1">
    <location>
        <begin position="19"/>
        <end position="73"/>
    </location>
</feature>
<feature type="DNA-binding region" description="H-T-H motif" evidence="1">
    <location>
        <begin position="46"/>
        <end position="69"/>
    </location>
</feature>
<feature type="region of interest" description="Disordered" evidence="2">
    <location>
        <begin position="77"/>
        <end position="135"/>
    </location>
</feature>
<feature type="region of interest" description="Disordered" evidence="2">
    <location>
        <begin position="171"/>
        <end position="190"/>
    </location>
</feature>
<feature type="region of interest" description="Disordered" evidence="2">
    <location>
        <begin position="386"/>
        <end position="411"/>
    </location>
</feature>
<feature type="region of interest" description="Disordered" evidence="2">
    <location>
        <begin position="494"/>
        <end position="601"/>
    </location>
</feature>
<feature type="region of interest" description="Disordered" evidence="2">
    <location>
        <begin position="620"/>
        <end position="640"/>
    </location>
</feature>
<feature type="region of interest" description="Disordered" evidence="2">
    <location>
        <begin position="696"/>
        <end position="719"/>
    </location>
</feature>
<feature type="compositionally biased region" description="Polar residues" evidence="2">
    <location>
        <begin position="122"/>
        <end position="135"/>
    </location>
</feature>
<feature type="compositionally biased region" description="Low complexity" evidence="2">
    <location>
        <begin position="171"/>
        <end position="185"/>
    </location>
</feature>
<feature type="compositionally biased region" description="Polar residues" evidence="2">
    <location>
        <begin position="387"/>
        <end position="406"/>
    </location>
</feature>
<feature type="compositionally biased region" description="Basic and acidic residues" evidence="2">
    <location>
        <begin position="499"/>
        <end position="521"/>
    </location>
</feature>
<feature type="compositionally biased region" description="Polar residues" evidence="2">
    <location>
        <begin position="542"/>
        <end position="553"/>
    </location>
</feature>
<feature type="compositionally biased region" description="Basic and acidic residues" evidence="2">
    <location>
        <begin position="562"/>
        <end position="571"/>
    </location>
</feature>
<feature type="compositionally biased region" description="Polar residues" evidence="2">
    <location>
        <begin position="573"/>
        <end position="582"/>
    </location>
</feature>
<feature type="compositionally biased region" description="Basic and acidic residues" evidence="2">
    <location>
        <begin position="706"/>
        <end position="719"/>
    </location>
</feature>